<organism>
    <name type="scientific">Bos taurus</name>
    <name type="common">Bovine</name>
    <dbReference type="NCBI Taxonomy" id="9913"/>
    <lineage>
        <taxon>Eukaryota</taxon>
        <taxon>Metazoa</taxon>
        <taxon>Chordata</taxon>
        <taxon>Craniata</taxon>
        <taxon>Vertebrata</taxon>
        <taxon>Euteleostomi</taxon>
        <taxon>Mammalia</taxon>
        <taxon>Eutheria</taxon>
        <taxon>Laurasiatheria</taxon>
        <taxon>Artiodactyla</taxon>
        <taxon>Ruminantia</taxon>
        <taxon>Pecora</taxon>
        <taxon>Bovidae</taxon>
        <taxon>Bovinae</taxon>
        <taxon>Bos</taxon>
    </lineage>
</organism>
<reference key="1">
    <citation type="submission" date="2006-08" db="EMBL/GenBank/DDBJ databases">
        <authorList>
            <consortium name="NIH - Mammalian Gene Collection (MGC) project"/>
        </authorList>
    </citation>
    <scope>NUCLEOTIDE SEQUENCE [LARGE SCALE MRNA]</scope>
    <source>
        <strain>Hereford</strain>
        <tissue>Fetal cerebellum</tissue>
    </source>
</reference>
<gene>
    <name type="primary">LETM1</name>
</gene>
<comment type="function">
    <text evidence="1 2">Plays an important role in maintenance of mitochondrial morphology and in mediating either calcium or potassium/proton antiport (By similarity). Mediates proton-dependent calcium efflux from mitochondrion (By similarity). Also functions as an electroneutral mitochondrial proton/potassium exchanger (By similarity). Crucial for the maintenance of mitochondrial tubular networks and for the assembly of the supercomplexes of the respiratory chain (By similarity). Required for the maintenance of the tubular shape and cristae organization (By similarity).</text>
</comment>
<comment type="catalytic activity">
    <reaction evidence="1">
        <text>Ca(2+)(in) + 2 H(+)(out) = Ca(2+)(out) + 2 H(+)(in)</text>
        <dbReference type="Rhea" id="RHEA:72199"/>
        <dbReference type="ChEBI" id="CHEBI:15378"/>
        <dbReference type="ChEBI" id="CHEBI:29108"/>
    </reaction>
</comment>
<comment type="catalytic activity">
    <reaction evidence="1">
        <text>K(+)(in) + H(+)(out) = K(+)(out) + H(+)(in)</text>
        <dbReference type="Rhea" id="RHEA:29467"/>
        <dbReference type="ChEBI" id="CHEBI:15378"/>
        <dbReference type="ChEBI" id="CHEBI:29103"/>
    </reaction>
</comment>
<comment type="activity regulation">
    <text evidence="1">Inhibited by ruthenium red or its derivative Ru360.</text>
</comment>
<comment type="subunit">
    <text evidence="1 2">Homohexamer (By similarity). Interacts with BCS1L (By similarity). Interacts with GHITM (By similarity).</text>
</comment>
<comment type="subcellular location">
    <subcellularLocation>
        <location evidence="2">Mitochondrion inner membrane</location>
        <topology evidence="3">Single-pass membrane protein</topology>
    </subcellularLocation>
</comment>
<comment type="PTM">
    <text evidence="1">PINK1-mediated phosphorylation at Thr-178, positively regulates its mitochondrial calcium transport activity.</text>
</comment>
<comment type="similarity">
    <text evidence="7">Belongs to the LETM1 family.</text>
</comment>
<proteinExistence type="evidence at transcript level"/>
<protein>
    <recommendedName>
        <fullName evidence="7">Mitochondrial proton/calcium exchanger protein</fullName>
    </recommendedName>
    <alternativeName>
        <fullName evidence="1">Electroneutral mitochondrial K(+)/H(+)exchanger</fullName>
        <shortName evidence="1">KHE</shortName>
    </alternativeName>
    <alternativeName>
        <fullName>Leucine zipper-EF-hand-containing transmembrane protein 1</fullName>
    </alternativeName>
</protein>
<feature type="transit peptide" description="Mitochondrion" evidence="3">
    <location>
        <begin position="1"/>
        <end position="93"/>
    </location>
</feature>
<feature type="chain" id="PRO_0000380701" description="Mitochondrial proton/calcium exchanger protein">
    <location>
        <begin position="94"/>
        <end position="732"/>
    </location>
</feature>
<feature type="topological domain" description="Mitochondrial intermembrane" evidence="1">
    <location>
        <begin position="94"/>
        <end position="194"/>
    </location>
</feature>
<feature type="transmembrane region" description="Helical" evidence="3">
    <location>
        <begin position="195"/>
        <end position="215"/>
    </location>
</feature>
<feature type="topological domain" description="Mitochondrial matrix" evidence="1">
    <location>
        <begin position="216"/>
        <end position="732"/>
    </location>
</feature>
<feature type="domain" description="Letm1 RBD" evidence="5">
    <location>
        <begin position="238"/>
        <end position="529"/>
    </location>
</feature>
<feature type="domain" description="EF-hand" evidence="4">
    <location>
        <begin position="656"/>
        <end position="691"/>
    </location>
</feature>
<feature type="region of interest" description="Disordered" evidence="6">
    <location>
        <begin position="711"/>
        <end position="732"/>
    </location>
</feature>
<feature type="coiled-coil region" evidence="3">
    <location>
        <begin position="448"/>
        <end position="478"/>
    </location>
</feature>
<feature type="coiled-coil region" evidence="3">
    <location>
        <begin position="528"/>
        <end position="620"/>
    </location>
</feature>
<feature type="coiled-coil region" evidence="3">
    <location>
        <begin position="701"/>
        <end position="732"/>
    </location>
</feature>
<feature type="binding site" evidence="4">
    <location>
        <position position="669"/>
    </location>
    <ligand>
        <name>Ca(2+)</name>
        <dbReference type="ChEBI" id="CHEBI:29108"/>
    </ligand>
</feature>
<feature type="binding site" evidence="4">
    <location>
        <position position="671"/>
    </location>
    <ligand>
        <name>Ca(2+)</name>
        <dbReference type="ChEBI" id="CHEBI:29108"/>
    </ligand>
</feature>
<feature type="binding site" evidence="4">
    <location>
        <position position="673"/>
    </location>
    <ligand>
        <name>Ca(2+)</name>
        <dbReference type="ChEBI" id="CHEBI:29108"/>
    </ligand>
</feature>
<feature type="binding site" evidence="4">
    <location>
        <position position="675"/>
    </location>
    <ligand>
        <name>Ca(2+)</name>
        <dbReference type="ChEBI" id="CHEBI:29108"/>
    </ligand>
</feature>
<feature type="binding site" evidence="4">
    <location>
        <position position="680"/>
    </location>
    <ligand>
        <name>Ca(2+)</name>
        <dbReference type="ChEBI" id="CHEBI:29108"/>
    </ligand>
</feature>
<feature type="modified residue" description="Phosphothreonine; by PINK1" evidence="1">
    <location>
        <position position="178"/>
    </location>
</feature>
<evidence type="ECO:0000250" key="1">
    <source>
        <dbReference type="UniProtKB" id="O95202"/>
    </source>
</evidence>
<evidence type="ECO:0000250" key="2">
    <source>
        <dbReference type="UniProtKB" id="Q9Z2I0"/>
    </source>
</evidence>
<evidence type="ECO:0000255" key="3"/>
<evidence type="ECO:0000255" key="4">
    <source>
        <dbReference type="PROSITE-ProRule" id="PRU00448"/>
    </source>
</evidence>
<evidence type="ECO:0000255" key="5">
    <source>
        <dbReference type="PROSITE-ProRule" id="PRU01094"/>
    </source>
</evidence>
<evidence type="ECO:0000256" key="6">
    <source>
        <dbReference type="SAM" id="MobiDB-lite"/>
    </source>
</evidence>
<evidence type="ECO:0000305" key="7"/>
<dbReference type="EMBL" id="BC120274">
    <property type="protein sequence ID" value="AAI20275.1"/>
    <property type="molecule type" value="mRNA"/>
</dbReference>
<dbReference type="RefSeq" id="NP_001069082.1">
    <property type="nucleotide sequence ID" value="NM_001075614.2"/>
</dbReference>
<dbReference type="SMR" id="Q0VCA3"/>
<dbReference type="FunCoup" id="Q0VCA3">
    <property type="interactions" value="3174"/>
</dbReference>
<dbReference type="STRING" id="9913.ENSBTAP00000026785"/>
<dbReference type="GlyGen" id="Q0VCA3">
    <property type="glycosylation" value="1 site, 1 O-linked glycan (1 site)"/>
</dbReference>
<dbReference type="PaxDb" id="9913-ENSBTAP00000026785"/>
<dbReference type="PeptideAtlas" id="Q0VCA3"/>
<dbReference type="GeneID" id="513324"/>
<dbReference type="KEGG" id="bta:513324"/>
<dbReference type="CTD" id="3954"/>
<dbReference type="eggNOG" id="KOG1043">
    <property type="taxonomic scope" value="Eukaryota"/>
</dbReference>
<dbReference type="InParanoid" id="Q0VCA3"/>
<dbReference type="OrthoDB" id="624114at2759"/>
<dbReference type="Proteomes" id="UP000009136">
    <property type="component" value="Unplaced"/>
</dbReference>
<dbReference type="GO" id="GO:0005743">
    <property type="term" value="C:mitochondrial inner membrane"/>
    <property type="evidence" value="ECO:0000250"/>
    <property type="project" value="UniProtKB"/>
</dbReference>
<dbReference type="GO" id="GO:0005739">
    <property type="term" value="C:mitochondrion"/>
    <property type="evidence" value="ECO:0000318"/>
    <property type="project" value="GO_Central"/>
</dbReference>
<dbReference type="GO" id="GO:0005509">
    <property type="term" value="F:calcium ion binding"/>
    <property type="evidence" value="ECO:0007669"/>
    <property type="project" value="InterPro"/>
</dbReference>
<dbReference type="GO" id="GO:0015369">
    <property type="term" value="F:calcium:proton antiporter activity"/>
    <property type="evidence" value="ECO:0000250"/>
    <property type="project" value="UniProtKB"/>
</dbReference>
<dbReference type="GO" id="GO:0043022">
    <property type="term" value="F:ribosome binding"/>
    <property type="evidence" value="ECO:0007669"/>
    <property type="project" value="InterPro"/>
</dbReference>
<dbReference type="GO" id="GO:0099093">
    <property type="term" value="P:calcium export from the mitochondrion"/>
    <property type="evidence" value="ECO:0000250"/>
    <property type="project" value="UniProtKB"/>
</dbReference>
<dbReference type="GO" id="GO:0007007">
    <property type="term" value="P:inner mitochondrial membrane organization"/>
    <property type="evidence" value="ECO:0000250"/>
    <property type="project" value="UniProtKB"/>
</dbReference>
<dbReference type="GO" id="GO:0051560">
    <property type="term" value="P:mitochondrial calcium ion homeostasis"/>
    <property type="evidence" value="ECO:0000250"/>
    <property type="project" value="UniProtKB"/>
</dbReference>
<dbReference type="GO" id="GO:0006851">
    <property type="term" value="P:mitochondrial calcium ion transmembrane transport"/>
    <property type="evidence" value="ECO:0000250"/>
    <property type="project" value="UniProtKB"/>
</dbReference>
<dbReference type="GO" id="GO:0140141">
    <property type="term" value="P:mitochondrial potassium ion transmembrane transport"/>
    <property type="evidence" value="ECO:0000250"/>
    <property type="project" value="UniProtKB"/>
</dbReference>
<dbReference type="GO" id="GO:0007005">
    <property type="term" value="P:mitochondrion organization"/>
    <property type="evidence" value="ECO:0000318"/>
    <property type="project" value="GO_Central"/>
</dbReference>
<dbReference type="GO" id="GO:0051562">
    <property type="term" value="P:negative regulation of mitochondrial calcium ion concentration"/>
    <property type="evidence" value="ECO:0000250"/>
    <property type="project" value="UniProtKB"/>
</dbReference>
<dbReference type="GO" id="GO:0034214">
    <property type="term" value="P:protein hexamerization"/>
    <property type="evidence" value="ECO:0000250"/>
    <property type="project" value="UniProtKB"/>
</dbReference>
<dbReference type="GO" id="GO:0051260">
    <property type="term" value="P:protein homooligomerization"/>
    <property type="evidence" value="ECO:0000250"/>
    <property type="project" value="UniProtKB"/>
</dbReference>
<dbReference type="GO" id="GO:1900069">
    <property type="term" value="P:regulation of cellular hyperosmotic salinity response"/>
    <property type="evidence" value="ECO:0000250"/>
    <property type="project" value="UniProtKB"/>
</dbReference>
<dbReference type="FunFam" id="1.10.238.10:FF:000290">
    <property type="entry name" value="LETM1 and EF-hand domain-containing protein 1, mitochondrial"/>
    <property type="match status" value="1"/>
</dbReference>
<dbReference type="Gene3D" id="1.10.238.10">
    <property type="entry name" value="EF-hand"/>
    <property type="match status" value="1"/>
</dbReference>
<dbReference type="InterPro" id="IPR011992">
    <property type="entry name" value="EF-hand-dom_pair"/>
</dbReference>
<dbReference type="InterPro" id="IPR018247">
    <property type="entry name" value="EF_Hand_1_Ca_BS"/>
</dbReference>
<dbReference type="InterPro" id="IPR002048">
    <property type="entry name" value="EF_hand_dom"/>
</dbReference>
<dbReference type="InterPro" id="IPR033122">
    <property type="entry name" value="LETM1-like_RBD"/>
</dbReference>
<dbReference type="InterPro" id="IPR044202">
    <property type="entry name" value="LETM1/MDM38-like"/>
</dbReference>
<dbReference type="PANTHER" id="PTHR14009">
    <property type="entry name" value="LEUCINE ZIPPER-EF-HAND CONTAINING TRANSMEMBRANE PROTEIN"/>
    <property type="match status" value="1"/>
</dbReference>
<dbReference type="PANTHER" id="PTHR14009:SF8">
    <property type="entry name" value="MITOCHONDRIAL PROTON_CALCIUM EXCHANGER PROTEIN"/>
    <property type="match status" value="1"/>
</dbReference>
<dbReference type="Pfam" id="PF07766">
    <property type="entry name" value="LETM1_RBD"/>
    <property type="match status" value="1"/>
</dbReference>
<dbReference type="SUPFAM" id="SSF47473">
    <property type="entry name" value="EF-hand"/>
    <property type="match status" value="1"/>
</dbReference>
<dbReference type="PROSITE" id="PS00018">
    <property type="entry name" value="EF_HAND_1"/>
    <property type="match status" value="1"/>
</dbReference>
<dbReference type="PROSITE" id="PS50222">
    <property type="entry name" value="EF_HAND_2"/>
    <property type="match status" value="1"/>
</dbReference>
<dbReference type="PROSITE" id="PS51758">
    <property type="entry name" value="LETM1_RBD"/>
    <property type="match status" value="1"/>
</dbReference>
<keyword id="KW-0050">Antiport</keyword>
<keyword id="KW-0106">Calcium</keyword>
<keyword id="KW-0109">Calcium transport</keyword>
<keyword id="KW-0175">Coiled coil</keyword>
<keyword id="KW-0406">Ion transport</keyword>
<keyword id="KW-0472">Membrane</keyword>
<keyword id="KW-0479">Metal-binding</keyword>
<keyword id="KW-0496">Mitochondrion</keyword>
<keyword id="KW-0999">Mitochondrion inner membrane</keyword>
<keyword id="KW-0597">Phosphoprotein</keyword>
<keyword id="KW-0630">Potassium</keyword>
<keyword id="KW-0633">Potassium transport</keyword>
<keyword id="KW-1185">Reference proteome</keyword>
<keyword id="KW-0809">Transit peptide</keyword>
<keyword id="KW-0812">Transmembrane</keyword>
<keyword id="KW-1133">Transmembrane helix</keyword>
<keyword id="KW-0813">Transport</keyword>
<name>LETM1_BOVIN</name>
<sequence>MASILLRSCRGRGPARLPPPRSAAPRGPAGDLACLSGASAVGLMSYVPLPLGSCAPVRPVYLSLRADPLGCWTLRPKRACAVLAGPRLLPVRCWHSSRPLGDDSVVEKSLRSLKDKNKKLEEGGPVYSPPAQAAVRKPLGQRVLDELRHYYHGFRLLWIDTKIAARMLWRILHGHSLTRRERRQFLRICADLFRLVPFLFFVVVPFMEFLLPVAVKLFPNMLPSTFETQSSKEERLKKELRVKLELAKFLQDTIEEMALKNKAAKGSATKDFSVFFQKIRETGERPSNEEIMRFSKLFEDELTLDNLTRPQLVALCKLLELQSIGTNNFLRFQLTMRLRSIKADDKLIAEEGVDSLNVKELQAACRARGMRALGVTEDRLRGQLKQWLELHLHQEIPTSLLILSRAMYLPETLSPADQLKSTLQTLPEIVAKEAQVKVAEVEGEQVDNKAKLEATLQEEAAIQQEHREKELQRKSQAAVAQAAKEVEPEVVAEGAPGRPVAELQPEEPAVTLPSEVLKDSAPVLEGLKEEEITQEEIDVLSNACSKLKEQKKSLTKEKEELELLKGDVQDYSQDLQEIKKELSKTGEEMYVEESKASKRLTKRVQQMIGQMDSLLAQLEADQKAGRLGPAAEAAPAGETVISVSELINAMKQIKHIPESKLLSLASALDDNKDGKVDIDDLVKVIELVDKEDVHISTSQVAEIVATLEKEEKVEEKEKAKEKAEKEAAEVQN</sequence>
<accession>Q0VCA3</accession>